<sequence length="221" mass="23617">MLDLFKAIGLGLVVLLPLANPLTTVALFLGLAGNMNSAERNRQSLMASVYVFAIMMVAYYAGQLVMDTFGISIPGLRIAGGLIVAFIGFRMLFPQQKAIDSPEAKSKSEELEDEPSANIAFVPLAMPSTAGPGTIAMIISSASTVRQSSTFADWVLMVAPPLIFFLVAVILWGSLRSSGAIMRLVGKGGIEAISRLMGFLLVCMGVQFIINGILEIIKTYH</sequence>
<evidence type="ECO:0000250" key="1"/>
<evidence type="ECO:0000255" key="2"/>
<evidence type="ECO:0000305" key="3"/>
<feature type="chain" id="PRO_0000343828" description="UPF0056 inner membrane protein MarC">
    <location>
        <begin position="1"/>
        <end position="221"/>
    </location>
</feature>
<feature type="topological domain" description="Periplasmic" evidence="2">
    <location>
        <begin position="1"/>
        <end position="7"/>
    </location>
</feature>
<feature type="transmembrane region" description="Helical" evidence="2">
    <location>
        <begin position="8"/>
        <end position="28"/>
    </location>
</feature>
<feature type="topological domain" description="Cytoplasmic" evidence="2">
    <location>
        <begin position="29"/>
        <end position="44"/>
    </location>
</feature>
<feature type="transmembrane region" description="Helical" evidence="2">
    <location>
        <begin position="45"/>
        <end position="65"/>
    </location>
</feature>
<feature type="topological domain" description="Periplasmic" evidence="2">
    <location>
        <begin position="66"/>
        <end position="68"/>
    </location>
</feature>
<feature type="transmembrane region" description="Helical" evidence="2">
    <location>
        <begin position="69"/>
        <end position="89"/>
    </location>
</feature>
<feature type="topological domain" description="Cytoplasmic" evidence="2">
    <location>
        <begin position="90"/>
        <end position="118"/>
    </location>
</feature>
<feature type="transmembrane region" description="Helical" evidence="2">
    <location>
        <begin position="119"/>
        <end position="139"/>
    </location>
</feature>
<feature type="topological domain" description="Periplasmic" evidence="2">
    <location>
        <begin position="140"/>
        <end position="154"/>
    </location>
</feature>
<feature type="transmembrane region" description="Helical" evidence="2">
    <location>
        <begin position="155"/>
        <end position="175"/>
    </location>
</feature>
<feature type="topological domain" description="Cytoplasmic" evidence="2">
    <location>
        <begin position="176"/>
        <end position="196"/>
    </location>
</feature>
<feature type="transmembrane region" description="Helical" evidence="2">
    <location>
        <begin position="197"/>
        <end position="217"/>
    </location>
</feature>
<feature type="topological domain" description="Periplasmic" evidence="2">
    <location>
        <begin position="218"/>
        <end position="221"/>
    </location>
</feature>
<proteinExistence type="inferred from homology"/>
<gene>
    <name type="primary">marC</name>
    <name type="ordered locus">SFV_1589</name>
</gene>
<comment type="subcellular location">
    <subcellularLocation>
        <location evidence="1">Cell inner membrane</location>
        <topology evidence="1">Multi-pass membrane protein</topology>
    </subcellularLocation>
</comment>
<comment type="similarity">
    <text evidence="3">Belongs to the UPF0056 (MarC) family.</text>
</comment>
<name>MARC_SHIF8</name>
<protein>
    <recommendedName>
        <fullName>UPF0056 inner membrane protein MarC</fullName>
    </recommendedName>
</protein>
<dbReference type="EMBL" id="CP000266">
    <property type="protein sequence ID" value="ABF03765.1"/>
    <property type="molecule type" value="Genomic_DNA"/>
</dbReference>
<dbReference type="RefSeq" id="WP_000885033.1">
    <property type="nucleotide sequence ID" value="NC_008258.1"/>
</dbReference>
<dbReference type="GeneID" id="93775693"/>
<dbReference type="KEGG" id="sfv:SFV_1589"/>
<dbReference type="HOGENOM" id="CLU_079909_2_0_6"/>
<dbReference type="Proteomes" id="UP000000659">
    <property type="component" value="Chromosome"/>
</dbReference>
<dbReference type="GO" id="GO:0005886">
    <property type="term" value="C:plasma membrane"/>
    <property type="evidence" value="ECO:0007669"/>
    <property type="project" value="UniProtKB-SubCell"/>
</dbReference>
<dbReference type="InterPro" id="IPR002771">
    <property type="entry name" value="Multi_antbiot-R_MarC"/>
</dbReference>
<dbReference type="NCBIfam" id="TIGR00427">
    <property type="entry name" value="NAAT family transporter"/>
    <property type="match status" value="1"/>
</dbReference>
<dbReference type="NCBIfam" id="NF008228">
    <property type="entry name" value="PRK10995.1"/>
    <property type="match status" value="1"/>
</dbReference>
<dbReference type="PANTHER" id="PTHR33508:SF2">
    <property type="entry name" value="UPF0056 INNER MEMBRANE PROTEIN MARC"/>
    <property type="match status" value="1"/>
</dbReference>
<dbReference type="PANTHER" id="PTHR33508">
    <property type="entry name" value="UPF0056 MEMBRANE PROTEIN YHCE"/>
    <property type="match status" value="1"/>
</dbReference>
<dbReference type="Pfam" id="PF01914">
    <property type="entry name" value="MarC"/>
    <property type="match status" value="1"/>
</dbReference>
<accession>Q0T4K0</accession>
<reference key="1">
    <citation type="journal article" date="2006" name="BMC Genomics">
        <title>Complete genome sequence of Shigella flexneri 5b and comparison with Shigella flexneri 2a.</title>
        <authorList>
            <person name="Nie H."/>
            <person name="Yang F."/>
            <person name="Zhang X."/>
            <person name="Yang J."/>
            <person name="Chen L."/>
            <person name="Wang J."/>
            <person name="Xiong Z."/>
            <person name="Peng J."/>
            <person name="Sun L."/>
            <person name="Dong J."/>
            <person name="Xue Y."/>
            <person name="Xu X."/>
            <person name="Chen S."/>
            <person name="Yao Z."/>
            <person name="Shen Y."/>
            <person name="Jin Q."/>
        </authorList>
    </citation>
    <scope>NUCLEOTIDE SEQUENCE [LARGE SCALE GENOMIC DNA]</scope>
    <source>
        <strain>8401</strain>
    </source>
</reference>
<keyword id="KW-0997">Cell inner membrane</keyword>
<keyword id="KW-1003">Cell membrane</keyword>
<keyword id="KW-0472">Membrane</keyword>
<keyword id="KW-0812">Transmembrane</keyword>
<keyword id="KW-1133">Transmembrane helix</keyword>
<organism>
    <name type="scientific">Shigella flexneri serotype 5b (strain 8401)</name>
    <dbReference type="NCBI Taxonomy" id="373384"/>
    <lineage>
        <taxon>Bacteria</taxon>
        <taxon>Pseudomonadati</taxon>
        <taxon>Pseudomonadota</taxon>
        <taxon>Gammaproteobacteria</taxon>
        <taxon>Enterobacterales</taxon>
        <taxon>Enterobacteriaceae</taxon>
        <taxon>Shigella</taxon>
    </lineage>
</organism>